<keyword id="KW-0687">Ribonucleoprotein</keyword>
<keyword id="KW-0689">Ribosomal protein</keyword>
<keyword id="KW-0694">RNA-binding</keyword>
<keyword id="KW-0699">rRNA-binding</keyword>
<reference key="1">
    <citation type="journal article" date="2010" name="Genome Biol. Evol.">
        <title>Continuing evolution of Burkholderia mallei through genome reduction and large-scale rearrangements.</title>
        <authorList>
            <person name="Losada L."/>
            <person name="Ronning C.M."/>
            <person name="DeShazer D."/>
            <person name="Woods D."/>
            <person name="Fedorova N."/>
            <person name="Kim H.S."/>
            <person name="Shabalina S.A."/>
            <person name="Pearson T.R."/>
            <person name="Brinkac L."/>
            <person name="Tan P."/>
            <person name="Nandi T."/>
            <person name="Crabtree J."/>
            <person name="Badger J."/>
            <person name="Beckstrom-Sternberg S."/>
            <person name="Saqib M."/>
            <person name="Schutzer S.E."/>
            <person name="Keim P."/>
            <person name="Nierman W.C."/>
        </authorList>
    </citation>
    <scope>NUCLEOTIDE SEQUENCE [LARGE SCALE GENOMIC DNA]</scope>
    <source>
        <strain>SAVP1</strain>
    </source>
</reference>
<name>RL24_BURMS</name>
<protein>
    <recommendedName>
        <fullName evidence="1">Large ribosomal subunit protein uL24</fullName>
    </recommendedName>
    <alternativeName>
        <fullName evidence="2">50S ribosomal protein L24</fullName>
    </alternativeName>
</protein>
<comment type="function">
    <text evidence="1">One of two assembly initiator proteins, it binds directly to the 5'-end of the 23S rRNA, where it nucleates assembly of the 50S subunit.</text>
</comment>
<comment type="function">
    <text evidence="1">One of the proteins that surrounds the polypeptide exit tunnel on the outside of the subunit.</text>
</comment>
<comment type="subunit">
    <text evidence="1">Part of the 50S ribosomal subunit.</text>
</comment>
<comment type="similarity">
    <text evidence="1">Belongs to the universal ribosomal protein uL24 family.</text>
</comment>
<proteinExistence type="inferred from homology"/>
<sequence length="102" mass="10709">MNKIRKGDEVIVITGKDKGKRGVVLAVGAEHVTVEGINLVKKHVKPNPMKGTTGGVEAKTMPLHISNVALVDANGKASRVGIKVEDGKKVRFLKTTGAVLSA</sequence>
<organism>
    <name type="scientific">Burkholderia mallei (strain SAVP1)</name>
    <dbReference type="NCBI Taxonomy" id="320388"/>
    <lineage>
        <taxon>Bacteria</taxon>
        <taxon>Pseudomonadati</taxon>
        <taxon>Pseudomonadota</taxon>
        <taxon>Betaproteobacteria</taxon>
        <taxon>Burkholderiales</taxon>
        <taxon>Burkholderiaceae</taxon>
        <taxon>Burkholderia</taxon>
        <taxon>pseudomallei group</taxon>
    </lineage>
</organism>
<feature type="chain" id="PRO_1000052194" description="Large ribosomal subunit protein uL24">
    <location>
        <begin position="1"/>
        <end position="102"/>
    </location>
</feature>
<accession>A1V892</accession>
<dbReference type="EMBL" id="CP000526">
    <property type="protein sequence ID" value="ABM52720.1"/>
    <property type="molecule type" value="Genomic_DNA"/>
</dbReference>
<dbReference type="RefSeq" id="WP_004197950.1">
    <property type="nucleotide sequence ID" value="NC_008785.1"/>
</dbReference>
<dbReference type="SMR" id="A1V892"/>
<dbReference type="GeneID" id="93061821"/>
<dbReference type="KEGG" id="bmv:BMASAVP1_A3158"/>
<dbReference type="HOGENOM" id="CLU_093315_2_2_4"/>
<dbReference type="GO" id="GO:1990904">
    <property type="term" value="C:ribonucleoprotein complex"/>
    <property type="evidence" value="ECO:0007669"/>
    <property type="project" value="UniProtKB-KW"/>
</dbReference>
<dbReference type="GO" id="GO:0005840">
    <property type="term" value="C:ribosome"/>
    <property type="evidence" value="ECO:0007669"/>
    <property type="project" value="UniProtKB-KW"/>
</dbReference>
<dbReference type="GO" id="GO:0019843">
    <property type="term" value="F:rRNA binding"/>
    <property type="evidence" value="ECO:0007669"/>
    <property type="project" value="UniProtKB-UniRule"/>
</dbReference>
<dbReference type="GO" id="GO:0003735">
    <property type="term" value="F:structural constituent of ribosome"/>
    <property type="evidence" value="ECO:0007669"/>
    <property type="project" value="InterPro"/>
</dbReference>
<dbReference type="GO" id="GO:0006412">
    <property type="term" value="P:translation"/>
    <property type="evidence" value="ECO:0007669"/>
    <property type="project" value="UniProtKB-UniRule"/>
</dbReference>
<dbReference type="CDD" id="cd06089">
    <property type="entry name" value="KOW_RPL26"/>
    <property type="match status" value="1"/>
</dbReference>
<dbReference type="Gene3D" id="2.30.30.30">
    <property type="match status" value="1"/>
</dbReference>
<dbReference type="HAMAP" id="MF_01326_B">
    <property type="entry name" value="Ribosomal_uL24_B"/>
    <property type="match status" value="1"/>
</dbReference>
<dbReference type="InterPro" id="IPR005824">
    <property type="entry name" value="KOW"/>
</dbReference>
<dbReference type="InterPro" id="IPR014722">
    <property type="entry name" value="Rib_uL2_dom2"/>
</dbReference>
<dbReference type="InterPro" id="IPR003256">
    <property type="entry name" value="Ribosomal_uL24"/>
</dbReference>
<dbReference type="InterPro" id="IPR005825">
    <property type="entry name" value="Ribosomal_uL24_CS"/>
</dbReference>
<dbReference type="InterPro" id="IPR041988">
    <property type="entry name" value="Ribosomal_uL24_KOW"/>
</dbReference>
<dbReference type="InterPro" id="IPR008991">
    <property type="entry name" value="Translation_prot_SH3-like_sf"/>
</dbReference>
<dbReference type="NCBIfam" id="TIGR01079">
    <property type="entry name" value="rplX_bact"/>
    <property type="match status" value="1"/>
</dbReference>
<dbReference type="PANTHER" id="PTHR12903">
    <property type="entry name" value="MITOCHONDRIAL RIBOSOMAL PROTEIN L24"/>
    <property type="match status" value="1"/>
</dbReference>
<dbReference type="Pfam" id="PF00467">
    <property type="entry name" value="KOW"/>
    <property type="match status" value="1"/>
</dbReference>
<dbReference type="Pfam" id="PF17136">
    <property type="entry name" value="ribosomal_L24"/>
    <property type="match status" value="1"/>
</dbReference>
<dbReference type="SUPFAM" id="SSF50104">
    <property type="entry name" value="Translation proteins SH3-like domain"/>
    <property type="match status" value="1"/>
</dbReference>
<dbReference type="PROSITE" id="PS01108">
    <property type="entry name" value="RIBOSOMAL_L24"/>
    <property type="match status" value="1"/>
</dbReference>
<gene>
    <name evidence="1" type="primary">rplX</name>
    <name type="ordered locus">BMASAVP1_A3158</name>
</gene>
<evidence type="ECO:0000255" key="1">
    <source>
        <dbReference type="HAMAP-Rule" id="MF_01326"/>
    </source>
</evidence>
<evidence type="ECO:0000305" key="2"/>